<protein>
    <recommendedName>
        <fullName evidence="1">2-dehydro-3-deoxyphosphooctonate aldolase</fullName>
        <ecNumber evidence="1">2.5.1.55</ecNumber>
    </recommendedName>
    <alternativeName>
        <fullName evidence="1">3-deoxy-D-manno-octulosonic acid 8-phosphate synthase</fullName>
    </alternativeName>
    <alternativeName>
        <fullName evidence="1">KDO-8-phosphate synthase</fullName>
        <shortName evidence="1">KDO 8-P synthase</shortName>
        <shortName evidence="1">KDOPS</shortName>
    </alternativeName>
    <alternativeName>
        <fullName evidence="1">Phospho-2-dehydro-3-deoxyoctonate aldolase</fullName>
    </alternativeName>
</protein>
<reference key="1">
    <citation type="submission" date="2006-08" db="EMBL/GenBank/DDBJ databases">
        <title>Complete sequence of chromosome 1 of Burkholderia cenocepacia HI2424.</title>
        <authorList>
            <person name="Copeland A."/>
            <person name="Lucas S."/>
            <person name="Lapidus A."/>
            <person name="Barry K."/>
            <person name="Detter J.C."/>
            <person name="Glavina del Rio T."/>
            <person name="Hammon N."/>
            <person name="Israni S."/>
            <person name="Pitluck S."/>
            <person name="Chain P."/>
            <person name="Malfatti S."/>
            <person name="Shin M."/>
            <person name="Vergez L."/>
            <person name="Schmutz J."/>
            <person name="Larimer F."/>
            <person name="Land M."/>
            <person name="Hauser L."/>
            <person name="Kyrpides N."/>
            <person name="Kim E."/>
            <person name="LiPuma J.J."/>
            <person name="Gonzalez C.F."/>
            <person name="Konstantinidis K."/>
            <person name="Tiedje J.M."/>
            <person name="Richardson P."/>
        </authorList>
    </citation>
    <scope>NUCLEOTIDE SEQUENCE [LARGE SCALE GENOMIC DNA]</scope>
    <source>
        <strain>HI2424</strain>
    </source>
</reference>
<accession>A0K8N2</accession>
<proteinExistence type="inferred from homology"/>
<feature type="chain" id="PRO_0000304439" description="2-dehydro-3-deoxyphosphooctonate aldolase">
    <location>
        <begin position="1"/>
        <end position="284"/>
    </location>
</feature>
<comment type="catalytic activity">
    <reaction evidence="1">
        <text>D-arabinose 5-phosphate + phosphoenolpyruvate + H2O = 3-deoxy-alpha-D-manno-2-octulosonate-8-phosphate + phosphate</text>
        <dbReference type="Rhea" id="RHEA:14053"/>
        <dbReference type="ChEBI" id="CHEBI:15377"/>
        <dbReference type="ChEBI" id="CHEBI:43474"/>
        <dbReference type="ChEBI" id="CHEBI:57693"/>
        <dbReference type="ChEBI" id="CHEBI:58702"/>
        <dbReference type="ChEBI" id="CHEBI:85985"/>
        <dbReference type="EC" id="2.5.1.55"/>
    </reaction>
</comment>
<comment type="pathway">
    <text evidence="1">Carbohydrate biosynthesis; 3-deoxy-D-manno-octulosonate biosynthesis; 3-deoxy-D-manno-octulosonate from D-ribulose 5-phosphate: step 2/3.</text>
</comment>
<comment type="pathway">
    <text evidence="1">Bacterial outer membrane biogenesis; lipopolysaccharide biosynthesis.</text>
</comment>
<comment type="subcellular location">
    <subcellularLocation>
        <location evidence="1">Cytoplasm</location>
    </subcellularLocation>
</comment>
<comment type="similarity">
    <text evidence="1">Belongs to the KdsA family.</text>
</comment>
<organism>
    <name type="scientific">Burkholderia cenocepacia (strain HI2424)</name>
    <dbReference type="NCBI Taxonomy" id="331272"/>
    <lineage>
        <taxon>Bacteria</taxon>
        <taxon>Pseudomonadati</taxon>
        <taxon>Pseudomonadota</taxon>
        <taxon>Betaproteobacteria</taxon>
        <taxon>Burkholderiales</taxon>
        <taxon>Burkholderiaceae</taxon>
        <taxon>Burkholderia</taxon>
        <taxon>Burkholderia cepacia complex</taxon>
    </lineage>
</organism>
<evidence type="ECO:0000255" key="1">
    <source>
        <dbReference type="HAMAP-Rule" id="MF_00056"/>
    </source>
</evidence>
<keyword id="KW-0963">Cytoplasm</keyword>
<keyword id="KW-0448">Lipopolysaccharide biosynthesis</keyword>
<keyword id="KW-0808">Transferase</keyword>
<dbReference type="EC" id="2.5.1.55" evidence="1"/>
<dbReference type="EMBL" id="CP000458">
    <property type="protein sequence ID" value="ABK08859.1"/>
    <property type="molecule type" value="Genomic_DNA"/>
</dbReference>
<dbReference type="RefSeq" id="WP_011549472.1">
    <property type="nucleotide sequence ID" value="NC_008542.1"/>
</dbReference>
<dbReference type="SMR" id="A0K8N2"/>
<dbReference type="KEGG" id="bch:Bcen2424_2108"/>
<dbReference type="HOGENOM" id="CLU_036666_0_0_4"/>
<dbReference type="UniPathway" id="UPA00030"/>
<dbReference type="UniPathway" id="UPA00357">
    <property type="reaction ID" value="UER00474"/>
</dbReference>
<dbReference type="GO" id="GO:0005737">
    <property type="term" value="C:cytoplasm"/>
    <property type="evidence" value="ECO:0007669"/>
    <property type="project" value="UniProtKB-SubCell"/>
</dbReference>
<dbReference type="GO" id="GO:0008676">
    <property type="term" value="F:3-deoxy-8-phosphooctulonate synthase activity"/>
    <property type="evidence" value="ECO:0007669"/>
    <property type="project" value="UniProtKB-UniRule"/>
</dbReference>
<dbReference type="GO" id="GO:0019294">
    <property type="term" value="P:keto-3-deoxy-D-manno-octulosonic acid biosynthetic process"/>
    <property type="evidence" value="ECO:0007669"/>
    <property type="project" value="UniProtKB-UniRule"/>
</dbReference>
<dbReference type="Gene3D" id="3.20.20.70">
    <property type="entry name" value="Aldolase class I"/>
    <property type="match status" value="1"/>
</dbReference>
<dbReference type="HAMAP" id="MF_00056">
    <property type="entry name" value="KDO8P_synth"/>
    <property type="match status" value="1"/>
</dbReference>
<dbReference type="InterPro" id="IPR013785">
    <property type="entry name" value="Aldolase_TIM"/>
</dbReference>
<dbReference type="InterPro" id="IPR006218">
    <property type="entry name" value="DAHP1/KDSA"/>
</dbReference>
<dbReference type="InterPro" id="IPR006269">
    <property type="entry name" value="KDO8P_synthase"/>
</dbReference>
<dbReference type="NCBIfam" id="TIGR01362">
    <property type="entry name" value="KDO8P_synth"/>
    <property type="match status" value="1"/>
</dbReference>
<dbReference type="NCBIfam" id="NF003543">
    <property type="entry name" value="PRK05198.1"/>
    <property type="match status" value="1"/>
</dbReference>
<dbReference type="PANTHER" id="PTHR21057">
    <property type="entry name" value="PHOSPHO-2-DEHYDRO-3-DEOXYHEPTONATE ALDOLASE"/>
    <property type="match status" value="1"/>
</dbReference>
<dbReference type="Pfam" id="PF00793">
    <property type="entry name" value="DAHP_synth_1"/>
    <property type="match status" value="1"/>
</dbReference>
<dbReference type="SUPFAM" id="SSF51569">
    <property type="entry name" value="Aldolase"/>
    <property type="match status" value="1"/>
</dbReference>
<gene>
    <name evidence="1" type="primary">kdsA</name>
    <name type="ordered locus">Bcen2424_2108</name>
</gene>
<sequence>MKLCDFEVGLDQPFFLIAGTCVVESEQMTIDTAGRLKEICEKLNVPFIYKSSYDKANRSSGKSFRGLGMDEGLRILGEVKRQLGLPVLTDVHSIDEIEQVASVVDVLQTPAFLCRQTDFIHACARSGKPVNIKKGQFLAPHDMKNVIDKARDAARDAGLSEDRFMACERGVSFGYNNLVSDMRSLAIMRETNAPVVFDATHSVQLPGGQGTSSGGQREFVPVLARAAVATGVAGLFMETHPNPAEAKSDGPNAVPLNRMGALLETLVTLDQAVKRNPFLENDFN</sequence>
<name>KDSA_BURCH</name>